<feature type="chain" id="PRO_0000181789" description="tRNA(Ile)-lysidine synthase">
    <location>
        <begin position="1"/>
        <end position="337"/>
    </location>
</feature>
<feature type="binding site" evidence="1">
    <location>
        <begin position="40"/>
        <end position="45"/>
    </location>
    <ligand>
        <name>ATP</name>
        <dbReference type="ChEBI" id="CHEBI:30616"/>
    </ligand>
</feature>
<protein>
    <recommendedName>
        <fullName evidence="1">tRNA(Ile)-lysidine synthase</fullName>
        <ecNumber evidence="1">6.3.4.19</ecNumber>
    </recommendedName>
    <alternativeName>
        <fullName evidence="1">tRNA(Ile)-2-lysyl-cytidine synthase</fullName>
    </alternativeName>
    <alternativeName>
        <fullName evidence="1">tRNA(Ile)-lysidine synthetase</fullName>
    </alternativeName>
</protein>
<evidence type="ECO:0000255" key="1">
    <source>
        <dbReference type="HAMAP-Rule" id="MF_01161"/>
    </source>
</evidence>
<evidence type="ECO:0000305" key="2"/>
<sequence length="337" mass="37383">MGEQRPLALAWSPWHDRLHRRLHQHPQLLPQRQPLLLAVSGGQDSMALLVLLQELQRLHHWPLNIWHGDHGWHSGSAVIAADLRSWCQQRDLPIQVDQAPQGSTASEASARHWRYSQLQQRAEELGADVVTGHTASDRAETLLLQLARGTDLAGLGALRPVRPLFNDSPDGAQLRRPLLGFSRADTAAVCRDLQVPIWHDPSNQSPAFARNRIRAEVLPVLEQLHPGCSQRMANLAERTSQLRDTQQELSQLALQPLRTSTGLDRRRLGALQPSTRRQLLVIWLAQQGVTALNAALLEQLTDRLALSAAGGSCDLPGGWRLQWQGDNLSLQPPAAGH</sequence>
<name>TILS_PARMW</name>
<keyword id="KW-0067">ATP-binding</keyword>
<keyword id="KW-0963">Cytoplasm</keyword>
<keyword id="KW-0436">Ligase</keyword>
<keyword id="KW-0547">Nucleotide-binding</keyword>
<keyword id="KW-0819">tRNA processing</keyword>
<proteinExistence type="inferred from homology"/>
<organism>
    <name type="scientific">Parasynechococcus marenigrum (strain WH8102)</name>
    <dbReference type="NCBI Taxonomy" id="84588"/>
    <lineage>
        <taxon>Bacteria</taxon>
        <taxon>Bacillati</taxon>
        <taxon>Cyanobacteriota</taxon>
        <taxon>Cyanophyceae</taxon>
        <taxon>Synechococcales</taxon>
        <taxon>Prochlorococcaceae</taxon>
        <taxon>Parasynechococcus</taxon>
        <taxon>Parasynechococcus marenigrum</taxon>
    </lineage>
</organism>
<gene>
    <name evidence="1" type="primary">tilS</name>
    <name type="ordered locus">SYNW0075</name>
</gene>
<comment type="function">
    <text evidence="1">Ligates lysine onto the cytidine present at position 34 of the AUA codon-specific tRNA(Ile) that contains the anticodon CAU, in an ATP-dependent manner. Cytidine is converted to lysidine, thus changing the amino acid specificity of the tRNA from methionine to isoleucine.</text>
</comment>
<comment type="catalytic activity">
    <reaction evidence="1">
        <text>cytidine(34) in tRNA(Ile2) + L-lysine + ATP = lysidine(34) in tRNA(Ile2) + AMP + diphosphate + H(+)</text>
        <dbReference type="Rhea" id="RHEA:43744"/>
        <dbReference type="Rhea" id="RHEA-COMP:10625"/>
        <dbReference type="Rhea" id="RHEA-COMP:10670"/>
        <dbReference type="ChEBI" id="CHEBI:15378"/>
        <dbReference type="ChEBI" id="CHEBI:30616"/>
        <dbReference type="ChEBI" id="CHEBI:32551"/>
        <dbReference type="ChEBI" id="CHEBI:33019"/>
        <dbReference type="ChEBI" id="CHEBI:82748"/>
        <dbReference type="ChEBI" id="CHEBI:83665"/>
        <dbReference type="ChEBI" id="CHEBI:456215"/>
        <dbReference type="EC" id="6.3.4.19"/>
    </reaction>
</comment>
<comment type="subcellular location">
    <subcellularLocation>
        <location evidence="1">Cytoplasm</location>
    </subcellularLocation>
</comment>
<comment type="domain">
    <text>The N-terminal region contains the highly conserved SGGXDS motif, predicted to be a P-loop motif involved in ATP binding.</text>
</comment>
<comment type="similarity">
    <text evidence="1">Belongs to the tRNA(Ile)-lysidine synthase family.</text>
</comment>
<comment type="sequence caution" evidence="2">
    <conflict type="erroneous initiation">
        <sequence resource="EMBL-CDS" id="CAE06590"/>
    </conflict>
</comment>
<accession>Q7UA26</accession>
<reference key="1">
    <citation type="journal article" date="2003" name="Nature">
        <title>The genome of a motile marine Synechococcus.</title>
        <authorList>
            <person name="Palenik B."/>
            <person name="Brahamsha B."/>
            <person name="Larimer F.W."/>
            <person name="Land M.L."/>
            <person name="Hauser L."/>
            <person name="Chain P."/>
            <person name="Lamerdin J.E."/>
            <person name="Regala W."/>
            <person name="Allen E.E."/>
            <person name="McCarren J."/>
            <person name="Paulsen I.T."/>
            <person name="Dufresne A."/>
            <person name="Partensky F."/>
            <person name="Webb E.A."/>
            <person name="Waterbury J."/>
        </authorList>
    </citation>
    <scope>NUCLEOTIDE SEQUENCE [LARGE SCALE GENOMIC DNA]</scope>
    <source>
        <strain>WH8102</strain>
    </source>
</reference>
<dbReference type="EC" id="6.3.4.19" evidence="1"/>
<dbReference type="EMBL" id="BX569689">
    <property type="protein sequence ID" value="CAE06590.1"/>
    <property type="status" value="ALT_INIT"/>
    <property type="molecule type" value="Genomic_DNA"/>
</dbReference>
<dbReference type="RefSeq" id="WP_011126953.1">
    <property type="nucleotide sequence ID" value="NC_005070.1"/>
</dbReference>
<dbReference type="SMR" id="Q7UA26"/>
<dbReference type="STRING" id="84588.SYNW0075"/>
<dbReference type="KEGG" id="syw:SYNW0075"/>
<dbReference type="eggNOG" id="COG0037">
    <property type="taxonomic scope" value="Bacteria"/>
</dbReference>
<dbReference type="HOGENOM" id="CLU_018869_0_0_3"/>
<dbReference type="Proteomes" id="UP000001422">
    <property type="component" value="Chromosome"/>
</dbReference>
<dbReference type="GO" id="GO:0005737">
    <property type="term" value="C:cytoplasm"/>
    <property type="evidence" value="ECO:0007669"/>
    <property type="project" value="UniProtKB-SubCell"/>
</dbReference>
<dbReference type="GO" id="GO:0005524">
    <property type="term" value="F:ATP binding"/>
    <property type="evidence" value="ECO:0007669"/>
    <property type="project" value="UniProtKB-UniRule"/>
</dbReference>
<dbReference type="GO" id="GO:0032267">
    <property type="term" value="F:tRNA(Ile)-lysidine synthase activity"/>
    <property type="evidence" value="ECO:0007669"/>
    <property type="project" value="UniProtKB-EC"/>
</dbReference>
<dbReference type="GO" id="GO:0006400">
    <property type="term" value="P:tRNA modification"/>
    <property type="evidence" value="ECO:0007669"/>
    <property type="project" value="UniProtKB-UniRule"/>
</dbReference>
<dbReference type="CDD" id="cd01992">
    <property type="entry name" value="TilS_N"/>
    <property type="match status" value="1"/>
</dbReference>
<dbReference type="Gene3D" id="3.40.50.620">
    <property type="entry name" value="HUPs"/>
    <property type="match status" value="1"/>
</dbReference>
<dbReference type="HAMAP" id="MF_01161">
    <property type="entry name" value="tRNA_Ile_lys_synt"/>
    <property type="match status" value="1"/>
</dbReference>
<dbReference type="InterPro" id="IPR014729">
    <property type="entry name" value="Rossmann-like_a/b/a_fold"/>
</dbReference>
<dbReference type="InterPro" id="IPR011063">
    <property type="entry name" value="TilS/TtcA_N"/>
</dbReference>
<dbReference type="InterPro" id="IPR012094">
    <property type="entry name" value="tRNA_Ile_lys_synt"/>
</dbReference>
<dbReference type="InterPro" id="IPR012795">
    <property type="entry name" value="tRNA_Ile_lys_synt_N"/>
</dbReference>
<dbReference type="InterPro" id="IPR015262">
    <property type="entry name" value="tRNA_Ile_lys_synt_subst-bd"/>
</dbReference>
<dbReference type="NCBIfam" id="TIGR02432">
    <property type="entry name" value="lysidine_TilS_N"/>
    <property type="match status" value="1"/>
</dbReference>
<dbReference type="PANTHER" id="PTHR43033">
    <property type="entry name" value="TRNA(ILE)-LYSIDINE SYNTHASE-RELATED"/>
    <property type="match status" value="1"/>
</dbReference>
<dbReference type="PANTHER" id="PTHR43033:SF1">
    <property type="entry name" value="TRNA(ILE)-LYSIDINE SYNTHASE-RELATED"/>
    <property type="match status" value="1"/>
</dbReference>
<dbReference type="Pfam" id="PF01171">
    <property type="entry name" value="ATP_bind_3"/>
    <property type="match status" value="1"/>
</dbReference>
<dbReference type="Pfam" id="PF09179">
    <property type="entry name" value="TilS"/>
    <property type="match status" value="1"/>
</dbReference>
<dbReference type="SUPFAM" id="SSF52402">
    <property type="entry name" value="Adenine nucleotide alpha hydrolases-like"/>
    <property type="match status" value="1"/>
</dbReference>
<dbReference type="SUPFAM" id="SSF82829">
    <property type="entry name" value="MesJ substrate recognition domain-like"/>
    <property type="match status" value="1"/>
</dbReference>